<keyword id="KW-1003">Cell membrane</keyword>
<keyword id="KW-0145">Chemotaxis</keyword>
<keyword id="KW-1015">Disulfide bond</keyword>
<keyword id="KW-0297">G-protein coupled receptor</keyword>
<keyword id="KW-0325">Glycoprotein</keyword>
<keyword id="KW-0472">Membrane</keyword>
<keyword id="KW-0675">Receptor</keyword>
<keyword id="KW-0807">Transducer</keyword>
<keyword id="KW-0812">Transmembrane</keyword>
<keyword id="KW-1133">Transmembrane helix</keyword>
<evidence type="ECO:0000250" key="1"/>
<evidence type="ECO:0000250" key="2">
    <source>
        <dbReference type="UniProtKB" id="P25024"/>
    </source>
</evidence>
<evidence type="ECO:0000255" key="3"/>
<evidence type="ECO:0000255" key="4">
    <source>
        <dbReference type="PROSITE-ProRule" id="PRU00521"/>
    </source>
</evidence>
<proteinExistence type="inferred from homology"/>
<reference key="1">
    <citation type="journal article" date="2005" name="J. Mol. Evol.">
        <title>Molecular evolution of CXCR1, a G protein-coupled receptor involved in signal transduction of neutrophils.</title>
        <authorList>
            <person name="Liu Y."/>
            <person name="Yang S."/>
            <person name="Lin A.A."/>
            <person name="Cavalli-Sforza L.L."/>
            <person name="Su B."/>
        </authorList>
    </citation>
    <scope>NUCLEOTIDE SEQUENCE [GENOMIC DNA]</scope>
</reference>
<comment type="function">
    <text evidence="2">Receptor to interleukin-8, which is a powerful neutrophils chemotactic factor. Binding of IL-8 to the receptor causes activation of neutrophils. This response is mediated via a G-protein that activates a phosphatidylinositol-calcium second messenger system.</text>
</comment>
<comment type="subunit">
    <text evidence="2">Interacts with IL8. Interacts with GNAI2.</text>
</comment>
<comment type="subcellular location">
    <subcellularLocation>
        <location evidence="1">Cell membrane</location>
        <topology evidence="1">Multi-pass membrane protein</topology>
    </subcellularLocation>
</comment>
<comment type="similarity">
    <text evidence="4">Belongs to the G-protein coupled receptor 1 family.</text>
</comment>
<feature type="chain" id="PRO_0000237620" description="C-X-C chemokine receptor type 1">
    <location>
        <begin position="1"/>
        <end position="351"/>
    </location>
</feature>
<feature type="topological domain" description="Extracellular" evidence="3">
    <location>
        <begin position="1"/>
        <end position="46"/>
    </location>
</feature>
<feature type="transmembrane region" description="Helical; Name=1" evidence="3">
    <location>
        <begin position="47"/>
        <end position="67"/>
    </location>
</feature>
<feature type="topological domain" description="Cytoplasmic" evidence="3">
    <location>
        <begin position="68"/>
        <end position="76"/>
    </location>
</feature>
<feature type="transmembrane region" description="Helical; Name=2" evidence="3">
    <location>
        <begin position="77"/>
        <end position="97"/>
    </location>
</feature>
<feature type="topological domain" description="Extracellular" evidence="3">
    <location>
        <begin position="98"/>
        <end position="112"/>
    </location>
</feature>
<feature type="transmembrane region" description="Helical; Name=3" evidence="3">
    <location>
        <begin position="113"/>
        <end position="133"/>
    </location>
</feature>
<feature type="topological domain" description="Cytoplasmic" evidence="3">
    <location>
        <begin position="134"/>
        <end position="154"/>
    </location>
</feature>
<feature type="transmembrane region" description="Helical; Name=4" evidence="3">
    <location>
        <begin position="155"/>
        <end position="175"/>
    </location>
</feature>
<feature type="topological domain" description="Extracellular" evidence="3">
    <location>
        <begin position="176"/>
        <end position="209"/>
    </location>
</feature>
<feature type="transmembrane region" description="Helical; Name=5" evidence="3">
    <location>
        <begin position="210"/>
        <end position="230"/>
    </location>
</feature>
<feature type="topological domain" description="Cytoplasmic" evidence="3">
    <location>
        <begin position="231"/>
        <end position="243"/>
    </location>
</feature>
<feature type="transmembrane region" description="Helical; Name=6" evidence="3">
    <location>
        <begin position="244"/>
        <end position="264"/>
    </location>
</feature>
<feature type="topological domain" description="Extracellular" evidence="3">
    <location>
        <begin position="265"/>
        <end position="289"/>
    </location>
</feature>
<feature type="transmembrane region" description="Helical; Name=7" evidence="3">
    <location>
        <begin position="290"/>
        <end position="310"/>
    </location>
</feature>
<feature type="topological domain" description="Cytoplasmic" evidence="3">
    <location>
        <begin position="311"/>
        <end position="351"/>
    </location>
</feature>
<feature type="glycosylation site" description="N-linked (GlcNAc...) asparagine" evidence="3">
    <location>
        <position position="3"/>
    </location>
</feature>
<feature type="glycosylation site" description="N-linked (GlcNAc...) asparagine" evidence="3">
    <location>
        <position position="194"/>
    </location>
</feature>
<feature type="disulfide bond" evidence="4">
    <location>
        <begin position="111"/>
        <end position="188"/>
    </location>
</feature>
<sequence length="351" mass="39981">MSNITDPQMWDYDGDPNFTGMPPIDEDYRPCRLETETLNKYVVIVTYALVFLLSLLGNSLVMLVILYSRVGRSVTDVYLLNLALADLLFALTLPIWAVSKVNGWIFGTLLCKVVSLLKEVNFYSGILLLACISVDRYLAIVHATRTLTQKRHLVKFVCLSCWGLSMILSLPFFLFRQAYHPKNSSPVCYEVLGNDTAKWRMVLRILPHTFGFIVPLFVMLFCYGFALCTLFKAHMGQKHRAMRVIFAVVLIFLLCWLPYNLVLLADTLMRTQLIKESCERRNDIGWALDATEILGFLHSCLNPIIYAFIGQNFRHGFLKILAMHGLVSKEFLARHHVTSYTSSSVNVSSNL</sequence>
<name>CXCR1_PONPY</name>
<accession>Q2YEF9</accession>
<organism>
    <name type="scientific">Pongo pygmaeus</name>
    <name type="common">Bornean orangutan</name>
    <dbReference type="NCBI Taxonomy" id="9600"/>
    <lineage>
        <taxon>Eukaryota</taxon>
        <taxon>Metazoa</taxon>
        <taxon>Chordata</taxon>
        <taxon>Craniata</taxon>
        <taxon>Vertebrata</taxon>
        <taxon>Euteleostomi</taxon>
        <taxon>Mammalia</taxon>
        <taxon>Eutheria</taxon>
        <taxon>Euarchontoglires</taxon>
        <taxon>Primates</taxon>
        <taxon>Haplorrhini</taxon>
        <taxon>Catarrhini</taxon>
        <taxon>Hominidae</taxon>
        <taxon>Pongo</taxon>
    </lineage>
</organism>
<protein>
    <recommendedName>
        <fullName>C-X-C chemokine receptor type 1</fullName>
        <shortName>CXC-R1</shortName>
        <shortName>CXCR-1</shortName>
    </recommendedName>
    <alternativeName>
        <fullName>High affinity interleukin-8 receptor A</fullName>
        <shortName>IL-8R A</shortName>
    </alternativeName>
    <alternativeName>
        <fullName>IL-8 receptor type 1</fullName>
    </alternativeName>
    <cdAntigenName>CD181</cdAntigenName>
</protein>
<gene>
    <name type="primary">CXCR1</name>
    <name type="synonym">IL8RA</name>
</gene>
<dbReference type="EMBL" id="AY916771">
    <property type="protein sequence ID" value="AAY21521.1"/>
    <property type="molecule type" value="Genomic_DNA"/>
</dbReference>
<dbReference type="SMR" id="Q2YEF9"/>
<dbReference type="GlyCosmos" id="Q2YEF9">
    <property type="glycosylation" value="2 sites, No reported glycans"/>
</dbReference>
<dbReference type="GO" id="GO:0009897">
    <property type="term" value="C:external side of plasma membrane"/>
    <property type="evidence" value="ECO:0007669"/>
    <property type="project" value="TreeGrafter"/>
</dbReference>
<dbReference type="GO" id="GO:0019957">
    <property type="term" value="F:C-C chemokine binding"/>
    <property type="evidence" value="ECO:0007669"/>
    <property type="project" value="TreeGrafter"/>
</dbReference>
<dbReference type="GO" id="GO:0016493">
    <property type="term" value="F:C-C chemokine receptor activity"/>
    <property type="evidence" value="ECO:0007669"/>
    <property type="project" value="TreeGrafter"/>
</dbReference>
<dbReference type="GO" id="GO:0016494">
    <property type="term" value="F:C-X-C chemokine receptor activity"/>
    <property type="evidence" value="ECO:0007669"/>
    <property type="project" value="InterPro"/>
</dbReference>
<dbReference type="GO" id="GO:0019959">
    <property type="term" value="F:interleukin-8 binding"/>
    <property type="evidence" value="ECO:0007669"/>
    <property type="project" value="InterPro"/>
</dbReference>
<dbReference type="GO" id="GO:0019722">
    <property type="term" value="P:calcium-mediated signaling"/>
    <property type="evidence" value="ECO:0007669"/>
    <property type="project" value="TreeGrafter"/>
</dbReference>
<dbReference type="GO" id="GO:0006955">
    <property type="term" value="P:immune response"/>
    <property type="evidence" value="ECO:0007669"/>
    <property type="project" value="TreeGrafter"/>
</dbReference>
<dbReference type="GO" id="GO:0030593">
    <property type="term" value="P:neutrophil chemotaxis"/>
    <property type="evidence" value="ECO:0007669"/>
    <property type="project" value="TreeGrafter"/>
</dbReference>
<dbReference type="GO" id="GO:0007204">
    <property type="term" value="P:positive regulation of cytosolic calcium ion concentration"/>
    <property type="evidence" value="ECO:0007669"/>
    <property type="project" value="TreeGrafter"/>
</dbReference>
<dbReference type="CDD" id="cd15178">
    <property type="entry name" value="7tmA_CXCR1_2"/>
    <property type="match status" value="1"/>
</dbReference>
<dbReference type="FunFam" id="1.20.1070.10:FF:000157">
    <property type="entry name" value="C-X-C chemokine receptor type 2"/>
    <property type="match status" value="1"/>
</dbReference>
<dbReference type="Gene3D" id="1.20.1070.10">
    <property type="entry name" value="Rhodopsin 7-helix transmembrane proteins"/>
    <property type="match status" value="1"/>
</dbReference>
<dbReference type="InterPro" id="IPR050119">
    <property type="entry name" value="CCR1-9-like"/>
</dbReference>
<dbReference type="InterPro" id="IPR001355">
    <property type="entry name" value="Chemokine_CXCR1"/>
</dbReference>
<dbReference type="InterPro" id="IPR000174">
    <property type="entry name" value="Chemokine_CXCR_1/2"/>
</dbReference>
<dbReference type="InterPro" id="IPR000276">
    <property type="entry name" value="GPCR_Rhodpsn"/>
</dbReference>
<dbReference type="InterPro" id="IPR017452">
    <property type="entry name" value="GPCR_Rhodpsn_7TM"/>
</dbReference>
<dbReference type="PANTHER" id="PTHR10489:SF916">
    <property type="entry name" value="C-X-C CHEMOKINE RECEPTOR TYPE 1"/>
    <property type="match status" value="1"/>
</dbReference>
<dbReference type="PANTHER" id="PTHR10489">
    <property type="entry name" value="CELL ADHESION MOLECULE"/>
    <property type="match status" value="1"/>
</dbReference>
<dbReference type="Pfam" id="PF00001">
    <property type="entry name" value="7tm_1"/>
    <property type="match status" value="1"/>
</dbReference>
<dbReference type="PRINTS" id="PR00237">
    <property type="entry name" value="GPCRRHODOPSN"/>
</dbReference>
<dbReference type="PRINTS" id="PR00427">
    <property type="entry name" value="INTRLEUKIN8R"/>
</dbReference>
<dbReference type="PRINTS" id="PR00572">
    <property type="entry name" value="INTRLEUKN8AR"/>
</dbReference>
<dbReference type="SUPFAM" id="SSF81321">
    <property type="entry name" value="Family A G protein-coupled receptor-like"/>
    <property type="match status" value="1"/>
</dbReference>
<dbReference type="PROSITE" id="PS00237">
    <property type="entry name" value="G_PROTEIN_RECEP_F1_1"/>
    <property type="match status" value="1"/>
</dbReference>
<dbReference type="PROSITE" id="PS50262">
    <property type="entry name" value="G_PROTEIN_RECEP_F1_2"/>
    <property type="match status" value="1"/>
</dbReference>